<sequence>MAKDDVIEVEGKVVDTMPNAMFTVELENGHQILATVSGKIRKNYIRILAGDRVTVEMSPYDLTRGRITYRFK</sequence>
<proteinExistence type="inferred from homology"/>
<gene>
    <name evidence="1" type="primary">infA</name>
    <name type="ordered locus">spr0211</name>
</gene>
<keyword id="KW-0963">Cytoplasm</keyword>
<keyword id="KW-0396">Initiation factor</keyword>
<keyword id="KW-0648">Protein biosynthesis</keyword>
<keyword id="KW-1185">Reference proteome</keyword>
<keyword id="KW-0694">RNA-binding</keyword>
<keyword id="KW-0699">rRNA-binding</keyword>
<reference key="1">
    <citation type="journal article" date="2001" name="J. Bacteriol.">
        <title>Genome of the bacterium Streptococcus pneumoniae strain R6.</title>
        <authorList>
            <person name="Hoskins J."/>
            <person name="Alborn W.E. Jr."/>
            <person name="Arnold J."/>
            <person name="Blaszczak L.C."/>
            <person name="Burgett S."/>
            <person name="DeHoff B.S."/>
            <person name="Estrem S.T."/>
            <person name="Fritz L."/>
            <person name="Fu D.-J."/>
            <person name="Fuller W."/>
            <person name="Geringer C."/>
            <person name="Gilmour R."/>
            <person name="Glass J.S."/>
            <person name="Khoja H."/>
            <person name="Kraft A.R."/>
            <person name="Lagace R.E."/>
            <person name="LeBlanc D.J."/>
            <person name="Lee L.N."/>
            <person name="Lefkowitz E.J."/>
            <person name="Lu J."/>
            <person name="Matsushima P."/>
            <person name="McAhren S.M."/>
            <person name="McHenney M."/>
            <person name="McLeaster K."/>
            <person name="Mundy C.W."/>
            <person name="Nicas T.I."/>
            <person name="Norris F.H."/>
            <person name="O'Gara M."/>
            <person name="Peery R.B."/>
            <person name="Robertson G.T."/>
            <person name="Rockey P."/>
            <person name="Sun P.-M."/>
            <person name="Winkler M.E."/>
            <person name="Yang Y."/>
            <person name="Young-Bellido M."/>
            <person name="Zhao G."/>
            <person name="Zook C.A."/>
            <person name="Baltz R.H."/>
            <person name="Jaskunas S.R."/>
            <person name="Rosteck P.R. Jr."/>
            <person name="Skatrud P.L."/>
            <person name="Glass J.I."/>
        </authorList>
    </citation>
    <scope>NUCLEOTIDE SEQUENCE [LARGE SCALE GENOMIC DNA]</scope>
    <source>
        <strain>ATCC BAA-255 / R6</strain>
    </source>
</reference>
<protein>
    <recommendedName>
        <fullName evidence="1">Translation initiation factor IF-1</fullName>
    </recommendedName>
</protein>
<evidence type="ECO:0000255" key="1">
    <source>
        <dbReference type="HAMAP-Rule" id="MF_00075"/>
    </source>
</evidence>
<evidence type="ECO:0000305" key="2"/>
<feature type="chain" id="PRO_0000095880" description="Translation initiation factor IF-1">
    <location>
        <begin position="1"/>
        <end position="72"/>
    </location>
</feature>
<feature type="domain" description="S1-like" evidence="1">
    <location>
        <begin position="1"/>
        <end position="72"/>
    </location>
</feature>
<organism>
    <name type="scientific">Streptococcus pneumoniae (strain ATCC BAA-255 / R6)</name>
    <dbReference type="NCBI Taxonomy" id="171101"/>
    <lineage>
        <taxon>Bacteria</taxon>
        <taxon>Bacillati</taxon>
        <taxon>Bacillota</taxon>
        <taxon>Bacilli</taxon>
        <taxon>Lactobacillales</taxon>
        <taxon>Streptococcaceae</taxon>
        <taxon>Streptococcus</taxon>
    </lineage>
</organism>
<name>IF1_STRR6</name>
<comment type="function">
    <text evidence="1">One of the essential components for the initiation of protein synthesis. Stabilizes the binding of IF-2 and IF-3 on the 30S subunit to which N-formylmethionyl-tRNA(fMet) subsequently binds. Helps modulate mRNA selection, yielding the 30S pre-initiation complex (PIC). Upon addition of the 50S ribosomal subunit IF-1, IF-2 and IF-3 are released leaving the mature 70S translation initiation complex.</text>
</comment>
<comment type="subunit">
    <text evidence="1">Component of the 30S ribosomal translation pre-initiation complex which assembles on the 30S ribosome in the order IF-2 and IF-3, IF-1 and N-formylmethionyl-tRNA(fMet); mRNA recruitment can occur at any time during PIC assembly.</text>
</comment>
<comment type="subcellular location">
    <subcellularLocation>
        <location evidence="1">Cytoplasm</location>
    </subcellularLocation>
</comment>
<comment type="similarity">
    <text evidence="1">Belongs to the IF-1 family.</text>
</comment>
<comment type="sequence caution" evidence="2">
    <conflict type="erroneous initiation">
        <sequence resource="EMBL-CDS" id="AAK99015"/>
    </conflict>
    <text>Extended N-terminus.</text>
</comment>
<accession>P65122</accession>
<accession>Q97SU0</accession>
<dbReference type="EMBL" id="AE007317">
    <property type="protein sequence ID" value="AAK99015.1"/>
    <property type="status" value="ALT_INIT"/>
    <property type="molecule type" value="Genomic_DNA"/>
</dbReference>
<dbReference type="PIR" id="C97898">
    <property type="entry name" value="C97898"/>
</dbReference>
<dbReference type="RefSeq" id="NP_357805.2">
    <property type="nucleotide sequence ID" value="NC_003098.1"/>
</dbReference>
<dbReference type="RefSeq" id="WP_001029883.1">
    <property type="nucleotide sequence ID" value="NC_003098.1"/>
</dbReference>
<dbReference type="SMR" id="P65122"/>
<dbReference type="STRING" id="171101.spr0211"/>
<dbReference type="GeneID" id="93964223"/>
<dbReference type="KEGG" id="spr:spr0211"/>
<dbReference type="PATRIC" id="fig|171101.6.peg.243"/>
<dbReference type="eggNOG" id="COG0361">
    <property type="taxonomic scope" value="Bacteria"/>
</dbReference>
<dbReference type="HOGENOM" id="CLU_151267_1_0_9"/>
<dbReference type="PRO" id="PR:P65122"/>
<dbReference type="Proteomes" id="UP000000586">
    <property type="component" value="Chromosome"/>
</dbReference>
<dbReference type="GO" id="GO:0005829">
    <property type="term" value="C:cytosol"/>
    <property type="evidence" value="ECO:0000318"/>
    <property type="project" value="GO_Central"/>
</dbReference>
<dbReference type="GO" id="GO:0043022">
    <property type="term" value="F:ribosome binding"/>
    <property type="evidence" value="ECO:0000318"/>
    <property type="project" value="GO_Central"/>
</dbReference>
<dbReference type="GO" id="GO:0019843">
    <property type="term" value="F:rRNA binding"/>
    <property type="evidence" value="ECO:0007669"/>
    <property type="project" value="UniProtKB-UniRule"/>
</dbReference>
<dbReference type="GO" id="GO:0003743">
    <property type="term" value="F:translation initiation factor activity"/>
    <property type="evidence" value="ECO:0007669"/>
    <property type="project" value="UniProtKB-UniRule"/>
</dbReference>
<dbReference type="CDD" id="cd04451">
    <property type="entry name" value="S1_IF1"/>
    <property type="match status" value="1"/>
</dbReference>
<dbReference type="FunFam" id="2.40.50.140:FF:000002">
    <property type="entry name" value="Translation initiation factor IF-1"/>
    <property type="match status" value="1"/>
</dbReference>
<dbReference type="Gene3D" id="2.40.50.140">
    <property type="entry name" value="Nucleic acid-binding proteins"/>
    <property type="match status" value="1"/>
</dbReference>
<dbReference type="HAMAP" id="MF_00075">
    <property type="entry name" value="IF_1"/>
    <property type="match status" value="1"/>
</dbReference>
<dbReference type="InterPro" id="IPR012340">
    <property type="entry name" value="NA-bd_OB-fold"/>
</dbReference>
<dbReference type="InterPro" id="IPR006196">
    <property type="entry name" value="RNA-binding_domain_S1_IF1"/>
</dbReference>
<dbReference type="InterPro" id="IPR003029">
    <property type="entry name" value="S1_domain"/>
</dbReference>
<dbReference type="InterPro" id="IPR004368">
    <property type="entry name" value="TIF_IF1"/>
</dbReference>
<dbReference type="NCBIfam" id="TIGR00008">
    <property type="entry name" value="infA"/>
    <property type="match status" value="1"/>
</dbReference>
<dbReference type="PANTHER" id="PTHR33370">
    <property type="entry name" value="TRANSLATION INITIATION FACTOR IF-1, CHLOROPLASTIC"/>
    <property type="match status" value="1"/>
</dbReference>
<dbReference type="PANTHER" id="PTHR33370:SF1">
    <property type="entry name" value="TRANSLATION INITIATION FACTOR IF-1, CHLOROPLASTIC"/>
    <property type="match status" value="1"/>
</dbReference>
<dbReference type="Pfam" id="PF01176">
    <property type="entry name" value="eIF-1a"/>
    <property type="match status" value="1"/>
</dbReference>
<dbReference type="SMART" id="SM00316">
    <property type="entry name" value="S1"/>
    <property type="match status" value="1"/>
</dbReference>
<dbReference type="SUPFAM" id="SSF50249">
    <property type="entry name" value="Nucleic acid-binding proteins"/>
    <property type="match status" value="1"/>
</dbReference>
<dbReference type="PROSITE" id="PS50832">
    <property type="entry name" value="S1_IF1_TYPE"/>
    <property type="match status" value="1"/>
</dbReference>